<dbReference type="EC" id="2.1.1.166" evidence="1"/>
<dbReference type="EMBL" id="CP000524">
    <property type="protein sequence ID" value="ABM45665.1"/>
    <property type="molecule type" value="Genomic_DNA"/>
</dbReference>
<dbReference type="RefSeq" id="WP_005766225.1">
    <property type="nucleotide sequence ID" value="NC_008783.1"/>
</dbReference>
<dbReference type="SMR" id="A1URN3"/>
<dbReference type="STRING" id="360095.BARBAKC583_0316"/>
<dbReference type="GeneID" id="4684912"/>
<dbReference type="KEGG" id="bbk:BARBAKC583_0316"/>
<dbReference type="PATRIC" id="fig|360095.6.peg.300"/>
<dbReference type="eggNOG" id="COG0293">
    <property type="taxonomic scope" value="Bacteria"/>
</dbReference>
<dbReference type="HOGENOM" id="CLU_009422_4_0_5"/>
<dbReference type="OrthoDB" id="9790080at2"/>
<dbReference type="Proteomes" id="UP000000643">
    <property type="component" value="Chromosome"/>
</dbReference>
<dbReference type="GO" id="GO:0005737">
    <property type="term" value="C:cytoplasm"/>
    <property type="evidence" value="ECO:0007669"/>
    <property type="project" value="UniProtKB-SubCell"/>
</dbReference>
<dbReference type="GO" id="GO:0008650">
    <property type="term" value="F:rRNA (uridine-2'-O-)-methyltransferase activity"/>
    <property type="evidence" value="ECO:0007669"/>
    <property type="project" value="UniProtKB-UniRule"/>
</dbReference>
<dbReference type="Gene3D" id="3.40.50.150">
    <property type="entry name" value="Vaccinia Virus protein VP39"/>
    <property type="match status" value="1"/>
</dbReference>
<dbReference type="HAMAP" id="MF_01547">
    <property type="entry name" value="RNA_methyltr_E"/>
    <property type="match status" value="1"/>
</dbReference>
<dbReference type="InterPro" id="IPR050082">
    <property type="entry name" value="RNA_methyltr_RlmE"/>
</dbReference>
<dbReference type="InterPro" id="IPR002877">
    <property type="entry name" value="RNA_MeTrfase_FtsJ_dom"/>
</dbReference>
<dbReference type="InterPro" id="IPR015507">
    <property type="entry name" value="rRNA-MeTfrase_E"/>
</dbReference>
<dbReference type="InterPro" id="IPR029063">
    <property type="entry name" value="SAM-dependent_MTases_sf"/>
</dbReference>
<dbReference type="PANTHER" id="PTHR10920">
    <property type="entry name" value="RIBOSOMAL RNA METHYLTRANSFERASE"/>
    <property type="match status" value="1"/>
</dbReference>
<dbReference type="PANTHER" id="PTHR10920:SF18">
    <property type="entry name" value="RRNA METHYLTRANSFERASE 2, MITOCHONDRIAL"/>
    <property type="match status" value="1"/>
</dbReference>
<dbReference type="Pfam" id="PF01728">
    <property type="entry name" value="FtsJ"/>
    <property type="match status" value="1"/>
</dbReference>
<dbReference type="PIRSF" id="PIRSF005461">
    <property type="entry name" value="23S_rRNA_mtase"/>
    <property type="match status" value="1"/>
</dbReference>
<dbReference type="SUPFAM" id="SSF53335">
    <property type="entry name" value="S-adenosyl-L-methionine-dependent methyltransferases"/>
    <property type="match status" value="1"/>
</dbReference>
<accession>A1URN3</accession>
<gene>
    <name evidence="1" type="primary">rlmE</name>
    <name evidence="1" type="synonym">ftsJ</name>
    <name evidence="1" type="synonym">rrmJ</name>
    <name type="ordered locus">BARBAKC583_0316</name>
</gene>
<protein>
    <recommendedName>
        <fullName evidence="1">Ribosomal RNA large subunit methyltransferase E</fullName>
        <ecNumber evidence="1">2.1.1.166</ecNumber>
    </recommendedName>
    <alternativeName>
        <fullName evidence="1">23S rRNA Um2552 methyltransferase</fullName>
    </alternativeName>
    <alternativeName>
        <fullName evidence="1">rRNA (uridine-2'-O-)-methyltransferase</fullName>
    </alternativeName>
</protein>
<organism>
    <name type="scientific">Bartonella bacilliformis (strain ATCC 35685 / KC583 / Herrer 020/F12,63)</name>
    <dbReference type="NCBI Taxonomy" id="360095"/>
    <lineage>
        <taxon>Bacteria</taxon>
        <taxon>Pseudomonadati</taxon>
        <taxon>Pseudomonadota</taxon>
        <taxon>Alphaproteobacteria</taxon>
        <taxon>Hyphomicrobiales</taxon>
        <taxon>Bartonellaceae</taxon>
        <taxon>Bartonella</taxon>
    </lineage>
</organism>
<comment type="function">
    <text evidence="1">Specifically methylates the uridine in position 2552 of 23S rRNA at the 2'-O position of the ribose in the fully assembled 50S ribosomal subunit.</text>
</comment>
<comment type="catalytic activity">
    <reaction evidence="1">
        <text>uridine(2552) in 23S rRNA + S-adenosyl-L-methionine = 2'-O-methyluridine(2552) in 23S rRNA + S-adenosyl-L-homocysteine + H(+)</text>
        <dbReference type="Rhea" id="RHEA:42720"/>
        <dbReference type="Rhea" id="RHEA-COMP:10202"/>
        <dbReference type="Rhea" id="RHEA-COMP:10203"/>
        <dbReference type="ChEBI" id="CHEBI:15378"/>
        <dbReference type="ChEBI" id="CHEBI:57856"/>
        <dbReference type="ChEBI" id="CHEBI:59789"/>
        <dbReference type="ChEBI" id="CHEBI:65315"/>
        <dbReference type="ChEBI" id="CHEBI:74478"/>
        <dbReference type="EC" id="2.1.1.166"/>
    </reaction>
</comment>
<comment type="subcellular location">
    <subcellularLocation>
        <location evidence="1">Cytoplasm</location>
    </subcellularLocation>
</comment>
<comment type="similarity">
    <text evidence="1">Belongs to the class I-like SAM-binding methyltransferase superfamily. RNA methyltransferase RlmE family.</text>
</comment>
<name>RLME_BARBK</name>
<feature type="chain" id="PRO_0000282726" description="Ribosomal RNA large subunit methyltransferase E">
    <location>
        <begin position="1"/>
        <end position="239"/>
    </location>
</feature>
<feature type="active site" description="Proton acceptor" evidence="1">
    <location>
        <position position="191"/>
    </location>
</feature>
<feature type="binding site" evidence="1">
    <location>
        <position position="88"/>
    </location>
    <ligand>
        <name>S-adenosyl-L-methionine</name>
        <dbReference type="ChEBI" id="CHEBI:59789"/>
    </ligand>
</feature>
<feature type="binding site" evidence="1">
    <location>
        <position position="90"/>
    </location>
    <ligand>
        <name>S-adenosyl-L-methionine</name>
        <dbReference type="ChEBI" id="CHEBI:59789"/>
    </ligand>
</feature>
<feature type="binding site" evidence="1">
    <location>
        <position position="111"/>
    </location>
    <ligand>
        <name>S-adenosyl-L-methionine</name>
        <dbReference type="ChEBI" id="CHEBI:59789"/>
    </ligand>
</feature>
<feature type="binding site" evidence="1">
    <location>
        <position position="127"/>
    </location>
    <ligand>
        <name>S-adenosyl-L-methionine</name>
        <dbReference type="ChEBI" id="CHEBI:59789"/>
    </ligand>
</feature>
<feature type="binding site" evidence="1">
    <location>
        <position position="151"/>
    </location>
    <ligand>
        <name>S-adenosyl-L-methionine</name>
        <dbReference type="ChEBI" id="CHEBI:59789"/>
    </ligand>
</feature>
<sequence>MKKTTRRTAGGRGGAGSHELYQRVKKKAGTIKASSRRWLERHLNDPYVHQSKADGYRSRAAYKLIEINERYKILKKGQKIIDLGAAPGGWCQVAARLVESKDYNPSVVGIDYLHMEPLPGVAILEMDFFHEDAPQELISTLGSKPDVVLSDMAAPTTGHRQTDHLRTIALCEAAVHFSISVLKPGGHFLTKTFQGGAEGNLLATLKQNFKKVHHVKPPASRAESVELYLLALQFKGKTD</sequence>
<proteinExistence type="inferred from homology"/>
<keyword id="KW-0963">Cytoplasm</keyword>
<keyword id="KW-0489">Methyltransferase</keyword>
<keyword id="KW-0698">rRNA processing</keyword>
<keyword id="KW-0949">S-adenosyl-L-methionine</keyword>
<keyword id="KW-0808">Transferase</keyword>
<evidence type="ECO:0000255" key="1">
    <source>
        <dbReference type="HAMAP-Rule" id="MF_01547"/>
    </source>
</evidence>
<reference key="1">
    <citation type="submission" date="2006-12" db="EMBL/GenBank/DDBJ databases">
        <authorList>
            <person name="Hendrix L."/>
            <person name="Mohamoud Y."/>
            <person name="Radune D."/>
            <person name="Shvartsbeyn A."/>
            <person name="Daugherty S."/>
            <person name="Dodson R."/>
            <person name="Durkin A.S."/>
            <person name="Harkins D."/>
            <person name="Huot H."/>
            <person name="Kothari S.P."/>
            <person name="Madupu R."/>
            <person name="Li J."/>
            <person name="Nelson W.C."/>
            <person name="Shrivastava S."/>
            <person name="Giglio M.G."/>
            <person name="Haft D."/>
            <person name="Selengut J."/>
            <person name="Fraser-Ligget C."/>
            <person name="Seshadri R."/>
        </authorList>
    </citation>
    <scope>NUCLEOTIDE SEQUENCE [LARGE SCALE GENOMIC DNA]</scope>
    <source>
        <strain>ATCC 35685 / KC583 / Herrer 020/F12,63</strain>
    </source>
</reference>